<keyword id="KW-0068">Autocatalytic cleavage</keyword>
<keyword id="KW-0963">Cytoplasm</keyword>
<keyword id="KW-0210">Decarboxylase</keyword>
<keyword id="KW-0456">Lyase</keyword>
<keyword id="KW-0566">Pantothenate biosynthesis</keyword>
<keyword id="KW-0670">Pyruvate</keyword>
<keyword id="KW-0704">Schiff base</keyword>
<keyword id="KW-0865">Zymogen</keyword>
<proteinExistence type="inferred from homology"/>
<protein>
    <recommendedName>
        <fullName evidence="1">Aspartate 1-decarboxylase</fullName>
        <ecNumber evidence="1">4.1.1.11</ecNumber>
    </recommendedName>
    <alternativeName>
        <fullName evidence="1">Aspartate alpha-decarboxylase</fullName>
    </alternativeName>
    <component>
        <recommendedName>
            <fullName evidence="1">Aspartate 1-decarboxylase beta chain</fullName>
        </recommendedName>
    </component>
    <component>
        <recommendedName>
            <fullName evidence="1">Aspartate 1-decarboxylase alpha chain</fullName>
        </recommendedName>
    </component>
</protein>
<organism>
    <name type="scientific">Thermobifida fusca (strain YX)</name>
    <dbReference type="NCBI Taxonomy" id="269800"/>
    <lineage>
        <taxon>Bacteria</taxon>
        <taxon>Bacillati</taxon>
        <taxon>Actinomycetota</taxon>
        <taxon>Actinomycetes</taxon>
        <taxon>Streptosporangiales</taxon>
        <taxon>Nocardiopsidaceae</taxon>
        <taxon>Thermobifida</taxon>
    </lineage>
</organism>
<sequence>MLRTMLNGKIHRATVTHADLHYVGSITIDADLMDAANLVDGEQVHVVNITNGHRLVTYVLTGERGSGVIGINGAAARLVAPGDLVIIISYVQLTEAERATHRPHVVHVDANNRIVALGDDLAEPVPGSDQKSGALLP</sequence>
<dbReference type="EC" id="4.1.1.11" evidence="1"/>
<dbReference type="EMBL" id="CP000088">
    <property type="protein sequence ID" value="AAZ55895.1"/>
    <property type="molecule type" value="Genomic_DNA"/>
</dbReference>
<dbReference type="RefSeq" id="WP_011292286.1">
    <property type="nucleotide sequence ID" value="NC_007333.1"/>
</dbReference>
<dbReference type="SMR" id="Q47NS4"/>
<dbReference type="STRING" id="269800.Tfu_1862"/>
<dbReference type="KEGG" id="tfu:Tfu_1862"/>
<dbReference type="eggNOG" id="COG0853">
    <property type="taxonomic scope" value="Bacteria"/>
</dbReference>
<dbReference type="HOGENOM" id="CLU_115305_2_0_11"/>
<dbReference type="OrthoDB" id="9803983at2"/>
<dbReference type="UniPathway" id="UPA00028">
    <property type="reaction ID" value="UER00002"/>
</dbReference>
<dbReference type="GO" id="GO:0005829">
    <property type="term" value="C:cytosol"/>
    <property type="evidence" value="ECO:0007669"/>
    <property type="project" value="TreeGrafter"/>
</dbReference>
<dbReference type="GO" id="GO:0004068">
    <property type="term" value="F:aspartate 1-decarboxylase activity"/>
    <property type="evidence" value="ECO:0007669"/>
    <property type="project" value="UniProtKB-UniRule"/>
</dbReference>
<dbReference type="GO" id="GO:0006523">
    <property type="term" value="P:alanine biosynthetic process"/>
    <property type="evidence" value="ECO:0007669"/>
    <property type="project" value="InterPro"/>
</dbReference>
<dbReference type="GO" id="GO:0015940">
    <property type="term" value="P:pantothenate biosynthetic process"/>
    <property type="evidence" value="ECO:0007669"/>
    <property type="project" value="UniProtKB-UniRule"/>
</dbReference>
<dbReference type="CDD" id="cd06919">
    <property type="entry name" value="Asp_decarbox"/>
    <property type="match status" value="1"/>
</dbReference>
<dbReference type="Gene3D" id="2.40.40.20">
    <property type="match status" value="1"/>
</dbReference>
<dbReference type="HAMAP" id="MF_00446">
    <property type="entry name" value="PanD"/>
    <property type="match status" value="1"/>
</dbReference>
<dbReference type="InterPro" id="IPR009010">
    <property type="entry name" value="Asp_de-COase-like_dom_sf"/>
</dbReference>
<dbReference type="InterPro" id="IPR003190">
    <property type="entry name" value="Asp_decarbox"/>
</dbReference>
<dbReference type="NCBIfam" id="TIGR00223">
    <property type="entry name" value="panD"/>
    <property type="match status" value="1"/>
</dbReference>
<dbReference type="PANTHER" id="PTHR21012">
    <property type="entry name" value="ASPARTATE 1-DECARBOXYLASE"/>
    <property type="match status" value="1"/>
</dbReference>
<dbReference type="PANTHER" id="PTHR21012:SF0">
    <property type="entry name" value="ASPARTATE 1-DECARBOXYLASE"/>
    <property type="match status" value="1"/>
</dbReference>
<dbReference type="Pfam" id="PF02261">
    <property type="entry name" value="Asp_decarbox"/>
    <property type="match status" value="1"/>
</dbReference>
<dbReference type="PIRSF" id="PIRSF006246">
    <property type="entry name" value="Asp_decarbox"/>
    <property type="match status" value="1"/>
</dbReference>
<dbReference type="SUPFAM" id="SSF50692">
    <property type="entry name" value="ADC-like"/>
    <property type="match status" value="1"/>
</dbReference>
<comment type="function">
    <text evidence="1">Catalyzes the pyruvoyl-dependent decarboxylation of aspartate to produce beta-alanine.</text>
</comment>
<comment type="catalytic activity">
    <reaction evidence="1">
        <text>L-aspartate + H(+) = beta-alanine + CO2</text>
        <dbReference type="Rhea" id="RHEA:19497"/>
        <dbReference type="ChEBI" id="CHEBI:15378"/>
        <dbReference type="ChEBI" id="CHEBI:16526"/>
        <dbReference type="ChEBI" id="CHEBI:29991"/>
        <dbReference type="ChEBI" id="CHEBI:57966"/>
        <dbReference type="EC" id="4.1.1.11"/>
    </reaction>
</comment>
<comment type="cofactor">
    <cofactor evidence="1">
        <name>pyruvate</name>
        <dbReference type="ChEBI" id="CHEBI:15361"/>
    </cofactor>
    <text evidence="1">Binds 1 pyruvoyl group covalently per subunit.</text>
</comment>
<comment type="pathway">
    <text evidence="1">Cofactor biosynthesis; (R)-pantothenate biosynthesis; beta-alanine from L-aspartate: step 1/1.</text>
</comment>
<comment type="subunit">
    <text evidence="1">Heterooctamer of four alpha and four beta subunits.</text>
</comment>
<comment type="subcellular location">
    <subcellularLocation>
        <location evidence="1">Cytoplasm</location>
    </subcellularLocation>
</comment>
<comment type="PTM">
    <text evidence="1">Is synthesized initially as an inactive proenzyme, which is activated by self-cleavage at a specific serine bond to produce a beta-subunit with a hydroxyl group at its C-terminus and an alpha-subunit with a pyruvoyl group at its N-terminus.</text>
</comment>
<comment type="similarity">
    <text evidence="1">Belongs to the PanD family.</text>
</comment>
<reference key="1">
    <citation type="journal article" date="2007" name="J. Bacteriol.">
        <title>Genome sequence and analysis of the soil cellulolytic actinomycete Thermobifida fusca YX.</title>
        <authorList>
            <person name="Lykidis A."/>
            <person name="Mavromatis K."/>
            <person name="Ivanova N."/>
            <person name="Anderson I."/>
            <person name="Land M."/>
            <person name="DiBartolo G."/>
            <person name="Martinez M."/>
            <person name="Lapidus A."/>
            <person name="Lucas S."/>
            <person name="Copeland A."/>
            <person name="Richardson P."/>
            <person name="Wilson D.B."/>
            <person name="Kyrpides N."/>
        </authorList>
    </citation>
    <scope>NUCLEOTIDE SEQUENCE [LARGE SCALE GENOMIC DNA]</scope>
    <source>
        <strain>YX</strain>
    </source>
</reference>
<accession>Q47NS4</accession>
<name>PAND_THEFY</name>
<evidence type="ECO:0000255" key="1">
    <source>
        <dbReference type="HAMAP-Rule" id="MF_00446"/>
    </source>
</evidence>
<gene>
    <name evidence="1" type="primary">panD</name>
    <name type="ordered locus">Tfu_1862</name>
</gene>
<feature type="chain" id="PRO_0000236905" description="Aspartate 1-decarboxylase beta chain" evidence="1">
    <location>
        <begin position="1"/>
        <end position="24"/>
    </location>
</feature>
<feature type="chain" id="PRO_0000236906" description="Aspartate 1-decarboxylase alpha chain" evidence="1">
    <location>
        <begin position="25"/>
        <end position="137"/>
    </location>
</feature>
<feature type="active site" description="Schiff-base intermediate with substrate; via pyruvic acid" evidence="1">
    <location>
        <position position="25"/>
    </location>
</feature>
<feature type="active site" description="Proton donor" evidence="1">
    <location>
        <position position="58"/>
    </location>
</feature>
<feature type="binding site" evidence="1">
    <location>
        <position position="57"/>
    </location>
    <ligand>
        <name>substrate</name>
    </ligand>
</feature>
<feature type="binding site" evidence="1">
    <location>
        <begin position="73"/>
        <end position="75"/>
    </location>
    <ligand>
        <name>substrate</name>
    </ligand>
</feature>
<feature type="modified residue" description="Pyruvic acid (Ser)" evidence="1">
    <location>
        <position position="25"/>
    </location>
</feature>